<proteinExistence type="inferred from homology"/>
<protein>
    <recommendedName>
        <fullName evidence="1">tRNA dimethylallyltransferase</fullName>
        <ecNumber evidence="1">2.5.1.75</ecNumber>
    </recommendedName>
    <alternativeName>
        <fullName evidence="1">Dimethylallyl diphosphate:tRNA dimethylallyltransferase</fullName>
        <shortName evidence="1">DMAPP:tRNA dimethylallyltransferase</shortName>
        <shortName evidence="1">DMATase</shortName>
    </alternativeName>
    <alternativeName>
        <fullName evidence="1">Isopentenyl-diphosphate:tRNA isopentenyltransferase</fullName>
        <shortName evidence="1">IPP transferase</shortName>
        <shortName evidence="1">IPPT</shortName>
        <shortName evidence="1">IPTase</shortName>
    </alternativeName>
</protein>
<comment type="function">
    <text evidence="1">Catalyzes the transfer of a dimethylallyl group onto the adenine at position 37 in tRNAs that read codons beginning with uridine, leading to the formation of N6-(dimethylallyl)adenosine (i(6)A).</text>
</comment>
<comment type="catalytic activity">
    <reaction evidence="1">
        <text>adenosine(37) in tRNA + dimethylallyl diphosphate = N(6)-dimethylallyladenosine(37) in tRNA + diphosphate</text>
        <dbReference type="Rhea" id="RHEA:26482"/>
        <dbReference type="Rhea" id="RHEA-COMP:10162"/>
        <dbReference type="Rhea" id="RHEA-COMP:10375"/>
        <dbReference type="ChEBI" id="CHEBI:33019"/>
        <dbReference type="ChEBI" id="CHEBI:57623"/>
        <dbReference type="ChEBI" id="CHEBI:74411"/>
        <dbReference type="ChEBI" id="CHEBI:74415"/>
        <dbReference type="EC" id="2.5.1.75"/>
    </reaction>
</comment>
<comment type="cofactor">
    <cofactor evidence="1">
        <name>Mg(2+)</name>
        <dbReference type="ChEBI" id="CHEBI:18420"/>
    </cofactor>
</comment>
<comment type="subunit">
    <text evidence="1">Monomer.</text>
</comment>
<comment type="similarity">
    <text evidence="1">Belongs to the IPP transferase family.</text>
</comment>
<accession>Q056X7</accession>
<gene>
    <name evidence="1" type="primary">miaA</name>
    <name type="ordered locus">BCc_371</name>
</gene>
<reference key="1">
    <citation type="journal article" date="2006" name="Science">
        <title>A small microbial genome: the end of a long symbiotic relationship?</title>
        <authorList>
            <person name="Perez-Brocal V."/>
            <person name="Gil R."/>
            <person name="Ramos S."/>
            <person name="Lamelas A."/>
            <person name="Postigo M."/>
            <person name="Michelena J.M."/>
            <person name="Silva F.J."/>
            <person name="Moya A."/>
            <person name="Latorre A."/>
        </authorList>
    </citation>
    <scope>NUCLEOTIDE SEQUENCE [LARGE SCALE GENOMIC DNA]</scope>
    <source>
        <strain>Cc</strain>
    </source>
</reference>
<keyword id="KW-0067">ATP-binding</keyword>
<keyword id="KW-0460">Magnesium</keyword>
<keyword id="KW-0547">Nucleotide-binding</keyword>
<keyword id="KW-1185">Reference proteome</keyword>
<keyword id="KW-0808">Transferase</keyword>
<keyword id="KW-0819">tRNA processing</keyword>
<name>MIAA_BUCCC</name>
<sequence length="312" mass="36686">MNKKKFLFFLMGPTAIGKSSLALEIKKKFPLIELISVDSKLVYKGLNIGTDKPNKSDLKNFSYKLVNIVKPKNIYTVINFYNDVLKEIKNILKSGKIPLLVGGTMLYFKILLNGFANLPPSNSIIRKYIFKNICLKKKKNLFNLLKKIDPISSKKIHINDVQRVLRAVEVFFVSGGFPLSELIKFFHNKLPYKVFQFGLIPDNKEHLYKKIEKRFFFMLKSGFKKEVQNLYNQKFLDPKLPSMNSIGYKQMLLYLKNKYTYFQMIKETIKSTHKLVKHQLTWLKKWPNIIFIKDNKKDLLITKIYKILNRNL</sequence>
<evidence type="ECO:0000255" key="1">
    <source>
        <dbReference type="HAMAP-Rule" id="MF_00185"/>
    </source>
</evidence>
<organism>
    <name type="scientific">Buchnera aphidicola subsp. Cinara cedri (strain Cc)</name>
    <dbReference type="NCBI Taxonomy" id="372461"/>
    <lineage>
        <taxon>Bacteria</taxon>
        <taxon>Pseudomonadati</taxon>
        <taxon>Pseudomonadota</taxon>
        <taxon>Gammaproteobacteria</taxon>
        <taxon>Enterobacterales</taxon>
        <taxon>Erwiniaceae</taxon>
        <taxon>Buchnera</taxon>
    </lineage>
</organism>
<feature type="chain" id="PRO_0000377095" description="tRNA dimethylallyltransferase">
    <location>
        <begin position="1"/>
        <end position="312"/>
    </location>
</feature>
<feature type="region of interest" description="Interaction with substrate tRNA" evidence="1">
    <location>
        <begin position="38"/>
        <end position="41"/>
    </location>
</feature>
<feature type="region of interest" description="Interaction with substrate tRNA" evidence="1">
    <location>
        <begin position="162"/>
        <end position="166"/>
    </location>
</feature>
<feature type="binding site" evidence="1">
    <location>
        <begin position="12"/>
        <end position="19"/>
    </location>
    <ligand>
        <name>ATP</name>
        <dbReference type="ChEBI" id="CHEBI:30616"/>
    </ligand>
</feature>
<feature type="binding site" evidence="1">
    <location>
        <begin position="14"/>
        <end position="19"/>
    </location>
    <ligand>
        <name>substrate</name>
    </ligand>
</feature>
<feature type="site" description="Interaction with substrate tRNA" evidence="1">
    <location>
        <position position="104"/>
    </location>
</feature>
<feature type="site" description="Interaction with substrate tRNA" evidence="1">
    <location>
        <position position="126"/>
    </location>
</feature>
<dbReference type="EC" id="2.5.1.75" evidence="1"/>
<dbReference type="EMBL" id="CP000263">
    <property type="protein sequence ID" value="ABJ90822.1"/>
    <property type="molecule type" value="Genomic_DNA"/>
</dbReference>
<dbReference type="RefSeq" id="WP_011672741.1">
    <property type="nucleotide sequence ID" value="NC_008513.1"/>
</dbReference>
<dbReference type="SMR" id="Q056X7"/>
<dbReference type="STRING" id="372461.BCc_371"/>
<dbReference type="KEGG" id="bcc:BCc_371"/>
<dbReference type="eggNOG" id="COG0324">
    <property type="taxonomic scope" value="Bacteria"/>
</dbReference>
<dbReference type="HOGENOM" id="CLU_032616_0_0_6"/>
<dbReference type="OrthoDB" id="9776390at2"/>
<dbReference type="Proteomes" id="UP000000669">
    <property type="component" value="Chromosome"/>
</dbReference>
<dbReference type="GO" id="GO:0005524">
    <property type="term" value="F:ATP binding"/>
    <property type="evidence" value="ECO:0007669"/>
    <property type="project" value="UniProtKB-UniRule"/>
</dbReference>
<dbReference type="GO" id="GO:0052381">
    <property type="term" value="F:tRNA dimethylallyltransferase activity"/>
    <property type="evidence" value="ECO:0007669"/>
    <property type="project" value="UniProtKB-UniRule"/>
</dbReference>
<dbReference type="GO" id="GO:0006400">
    <property type="term" value="P:tRNA modification"/>
    <property type="evidence" value="ECO:0007669"/>
    <property type="project" value="TreeGrafter"/>
</dbReference>
<dbReference type="Gene3D" id="1.10.20.140">
    <property type="match status" value="1"/>
</dbReference>
<dbReference type="Gene3D" id="3.40.50.300">
    <property type="entry name" value="P-loop containing nucleotide triphosphate hydrolases"/>
    <property type="match status" value="1"/>
</dbReference>
<dbReference type="HAMAP" id="MF_00185">
    <property type="entry name" value="IPP_trans"/>
    <property type="match status" value="1"/>
</dbReference>
<dbReference type="InterPro" id="IPR039657">
    <property type="entry name" value="Dimethylallyltransferase"/>
</dbReference>
<dbReference type="InterPro" id="IPR018022">
    <property type="entry name" value="IPT"/>
</dbReference>
<dbReference type="InterPro" id="IPR027417">
    <property type="entry name" value="P-loop_NTPase"/>
</dbReference>
<dbReference type="NCBIfam" id="TIGR00174">
    <property type="entry name" value="miaA"/>
    <property type="match status" value="1"/>
</dbReference>
<dbReference type="PANTHER" id="PTHR11088">
    <property type="entry name" value="TRNA DIMETHYLALLYLTRANSFERASE"/>
    <property type="match status" value="1"/>
</dbReference>
<dbReference type="PANTHER" id="PTHR11088:SF60">
    <property type="entry name" value="TRNA DIMETHYLALLYLTRANSFERASE"/>
    <property type="match status" value="1"/>
</dbReference>
<dbReference type="Pfam" id="PF01715">
    <property type="entry name" value="IPPT"/>
    <property type="match status" value="1"/>
</dbReference>
<dbReference type="SUPFAM" id="SSF52540">
    <property type="entry name" value="P-loop containing nucleoside triphosphate hydrolases"/>
    <property type="match status" value="1"/>
</dbReference>